<name>PRO_ADEO7</name>
<comment type="function">
    <text evidence="1">Cleaves viral precursor proteins (pTP, pIIIa, pVI, pVII, pVIII, and pX) inside newly assembled particles giving rise to mature virions. Protease complexed to its cofactor slides along the viral DNA to specifically locate and cleave the viral precursors. Mature virions have a weakened organization compared to the unmature virions, thereby facilitating subsequent uncoating. Without maturation, the particle lacks infectivity and is unable to uncoat. Late in adenovirus infection, in the cytoplasm, may participate in the cytoskeleton destruction. Cleaves host cell cytoskeletal keratins K7 and K18.</text>
</comment>
<comment type="catalytic activity">
    <reaction evidence="1">
        <text>Cleaves proteins of the adenovirus and its host cell at two consensus sites: -Yaa-Xaa-Gly-Gly-|-Xaa- and -Yaa-Xaa-Gly-Xaa-|-Gly- (in which Yaa is Met, Ile or Leu, and Xaa is any amino acid).</text>
        <dbReference type="EC" id="3.4.22.39"/>
    </reaction>
</comment>
<comment type="activity regulation">
    <text evidence="1">Requires DNA and protease cofactor for maximal activation. Inside nascent virions, becomes partially activated by binding to the viral DNA, allowing it to cleave the cofactor that binds to the protease and fully activates it. Actin, like the viral protease cofactor, seems to act as a cofactor in the cleavage of cytokeratin 18 and of actin itself.</text>
</comment>
<comment type="subunit">
    <text evidence="1">Interacts with protease cofactor pVI-C; this interaction is necessary for protease activation.</text>
</comment>
<comment type="subcellular location">
    <subcellularLocation>
        <location evidence="1">Virion</location>
    </subcellularLocation>
    <subcellularLocation>
        <location evidence="1">Host nucleus</location>
    </subcellularLocation>
    <text evidence="1">Present in about 10 copies per virion.</text>
</comment>
<comment type="induction">
    <text evidence="1">Expressed in the late phase of the viral replicative cycle.</text>
</comment>
<comment type="miscellaneous">
    <text evidence="1">All late proteins expressed from the major late promoter are produced by alternative splicing and alternative polyadenylation of the same gene giving rise to non-overlapping ORFs. A leader sequence is present in the N-terminus of all these mRNAs and is recognized by the viral shutoff protein to provide expression although conventional translation via ribosome scanning from the cap has been shut off in the host cell.</text>
</comment>
<comment type="similarity">
    <text evidence="1">Belongs to the peptidase C5 family.</text>
</comment>
<gene>
    <name evidence="1" type="primary">L3</name>
</gene>
<organismHost>
    <name type="scientific">Ovis aries</name>
    <name type="common">Sheep</name>
    <dbReference type="NCBI Taxonomy" id="9940"/>
</organismHost>
<reference key="1">
    <citation type="journal article" date="1995" name="Virology">
        <title>Sequence of ovine adenovirus homologs for 100K hexon assembly, 33K, pVIII, and fiber genes: early region E3 is not in the expected location.</title>
        <authorList>
            <person name="Vrati S."/>
            <person name="Boyle D."/>
            <person name="Kocherhans R."/>
            <person name="Both G.W."/>
        </authorList>
    </citation>
    <scope>NUCLEOTIDE SEQUENCE [GENOMIC DNA]</scope>
    <source>
        <strain>OAV287</strain>
    </source>
</reference>
<sequence>MSGTSESELKNLISSLHLNNGFLGIFDCRFPGFLQKSKIQTAIINTGPREQGGIHWITLALEPISYKLFIFDPLGWKDTQLIKFYNFSLNSLIKRSALNNSDRCITVERNTQSVQCTCAGSCGLFCIFFLYCFHFYKQNVFKSWLFQKLNGSTPSLIPCEPHLLHENQTFLYDFLNAKSVYFRKNYRTFIENTKTGLIKTH</sequence>
<dbReference type="EC" id="3.4.22.39" evidence="1"/>
<dbReference type="EMBL" id="U40839">
    <property type="protein sequence ID" value="AAA84980.1"/>
    <property type="molecule type" value="Genomic_DNA"/>
</dbReference>
<dbReference type="RefSeq" id="NP_659524.1">
    <property type="nucleotide sequence ID" value="NC_004037.2"/>
</dbReference>
<dbReference type="SMR" id="Q83906"/>
<dbReference type="MEROPS" id="C05.001"/>
<dbReference type="KEGG" id="vg:949183"/>
<dbReference type="OrthoDB" id="9248at10239"/>
<dbReference type="Proteomes" id="UP000008089">
    <property type="component" value="Genome"/>
</dbReference>
<dbReference type="GO" id="GO:0042025">
    <property type="term" value="C:host cell nucleus"/>
    <property type="evidence" value="ECO:0007669"/>
    <property type="project" value="UniProtKB-SubCell"/>
</dbReference>
<dbReference type="GO" id="GO:0044423">
    <property type="term" value="C:virion component"/>
    <property type="evidence" value="ECO:0007669"/>
    <property type="project" value="UniProtKB-UniRule"/>
</dbReference>
<dbReference type="GO" id="GO:0004197">
    <property type="term" value="F:cysteine-type endopeptidase activity"/>
    <property type="evidence" value="ECO:0007669"/>
    <property type="project" value="UniProtKB-UniRule"/>
</dbReference>
<dbReference type="GO" id="GO:0003677">
    <property type="term" value="F:DNA binding"/>
    <property type="evidence" value="ECO:0007669"/>
    <property type="project" value="UniProtKB-UniRule"/>
</dbReference>
<dbReference type="GO" id="GO:0006508">
    <property type="term" value="P:proteolysis"/>
    <property type="evidence" value="ECO:0007669"/>
    <property type="project" value="UniProtKB-KW"/>
</dbReference>
<dbReference type="Gene3D" id="3.40.395.10">
    <property type="entry name" value="Adenoviral Proteinase, Chain A"/>
    <property type="match status" value="1"/>
</dbReference>
<dbReference type="HAMAP" id="MF_04059">
    <property type="entry name" value="ADV_PRO"/>
    <property type="match status" value="1"/>
</dbReference>
<dbReference type="InterPro" id="IPR038765">
    <property type="entry name" value="Papain-like_cys_pep_sf"/>
</dbReference>
<dbReference type="InterPro" id="IPR000855">
    <property type="entry name" value="Peptidase_C5"/>
</dbReference>
<dbReference type="Pfam" id="PF00770">
    <property type="entry name" value="Peptidase_C5"/>
    <property type="match status" value="1"/>
</dbReference>
<dbReference type="PIRSF" id="PIRSF001218">
    <property type="entry name" value="Protease_ADV"/>
    <property type="match status" value="1"/>
</dbReference>
<dbReference type="PRINTS" id="PR00703">
    <property type="entry name" value="ADVENDOPTASE"/>
</dbReference>
<dbReference type="SUPFAM" id="SSF54001">
    <property type="entry name" value="Cysteine proteinases"/>
    <property type="match status" value="1"/>
</dbReference>
<keyword id="KW-0068">Autocatalytic cleavage</keyword>
<keyword id="KW-1015">Disulfide bond</keyword>
<keyword id="KW-0238">DNA-binding</keyword>
<keyword id="KW-1048">Host nucleus</keyword>
<keyword id="KW-0378">Hydrolase</keyword>
<keyword id="KW-0426">Late protein</keyword>
<keyword id="KW-0645">Protease</keyword>
<keyword id="KW-1185">Reference proteome</keyword>
<keyword id="KW-0788">Thiol protease</keyword>
<keyword id="KW-0946">Virion</keyword>
<protein>
    <recommendedName>
        <fullName evidence="1">Protease</fullName>
        <ecNumber evidence="1">3.4.22.39</ecNumber>
    </recommendedName>
    <alternativeName>
        <fullName evidence="1">Adenain</fullName>
    </alternativeName>
    <alternativeName>
        <fullName evidence="1">Adenovirus protease</fullName>
        <shortName evidence="1">AVP</shortName>
    </alternativeName>
    <alternativeName>
        <fullName evidence="1">Adenovirus proteinase</fullName>
    </alternativeName>
    <alternativeName>
        <fullName evidence="1">Endoprotease</fullName>
    </alternativeName>
</protein>
<organism>
    <name type="scientific">Ovine adenovirus D serotype 7 (isolate OAV287)</name>
    <name type="common">OAdV-7</name>
    <name type="synonym">Ovine adenovirus 7</name>
    <dbReference type="NCBI Taxonomy" id="114430"/>
    <lineage>
        <taxon>Viruses</taxon>
        <taxon>Varidnaviria</taxon>
        <taxon>Bamfordvirae</taxon>
        <taxon>Preplasmiviricota</taxon>
        <taxon>Tectiliviricetes</taxon>
        <taxon>Rowavirales</taxon>
        <taxon>Adenoviridae</taxon>
        <taxon>Atadenovirus</taxon>
        <taxon>Ovine adenovirus D</taxon>
    </lineage>
</organism>
<feature type="chain" id="PRO_0000218046" description="Protease">
    <location>
        <begin position="1"/>
        <end position="201"/>
    </location>
</feature>
<feature type="active site" evidence="1">
    <location>
        <position position="55"/>
    </location>
</feature>
<feature type="active site" evidence="1">
    <location>
        <position position="72"/>
    </location>
</feature>
<feature type="active site" evidence="1">
    <location>
        <position position="122"/>
    </location>
</feature>
<feature type="site" description="Cleavage; by autolysis" evidence="1">
    <location>
        <begin position="52"/>
        <end position="53"/>
    </location>
</feature>
<feature type="disulfide bond" description="Interchain (with C-10 in cleaved protease cofactor pVI-C)" evidence="1">
    <location>
        <position position="104"/>
    </location>
</feature>
<accession>Q83906</accession>
<evidence type="ECO:0000255" key="1">
    <source>
        <dbReference type="HAMAP-Rule" id="MF_04059"/>
    </source>
</evidence>
<proteinExistence type="inferred from homology"/>